<name>RL3_HYPNA</name>
<dbReference type="EMBL" id="CP000158">
    <property type="protein sequence ID" value="ABI75390.1"/>
    <property type="molecule type" value="Genomic_DNA"/>
</dbReference>
<dbReference type="RefSeq" id="WP_011647826.1">
    <property type="nucleotide sequence ID" value="NC_008358.1"/>
</dbReference>
<dbReference type="SMR" id="Q0BYB4"/>
<dbReference type="STRING" id="228405.HNE_2851"/>
<dbReference type="KEGG" id="hne:HNE_2851"/>
<dbReference type="eggNOG" id="COG0087">
    <property type="taxonomic scope" value="Bacteria"/>
</dbReference>
<dbReference type="HOGENOM" id="CLU_044142_2_0_5"/>
<dbReference type="Proteomes" id="UP000001959">
    <property type="component" value="Chromosome"/>
</dbReference>
<dbReference type="GO" id="GO:0022625">
    <property type="term" value="C:cytosolic large ribosomal subunit"/>
    <property type="evidence" value="ECO:0007669"/>
    <property type="project" value="TreeGrafter"/>
</dbReference>
<dbReference type="GO" id="GO:0019843">
    <property type="term" value="F:rRNA binding"/>
    <property type="evidence" value="ECO:0007669"/>
    <property type="project" value="UniProtKB-UniRule"/>
</dbReference>
<dbReference type="GO" id="GO:0003735">
    <property type="term" value="F:structural constituent of ribosome"/>
    <property type="evidence" value="ECO:0007669"/>
    <property type="project" value="InterPro"/>
</dbReference>
<dbReference type="GO" id="GO:0006412">
    <property type="term" value="P:translation"/>
    <property type="evidence" value="ECO:0007669"/>
    <property type="project" value="UniProtKB-UniRule"/>
</dbReference>
<dbReference type="FunFam" id="2.40.30.10:FF:000004">
    <property type="entry name" value="50S ribosomal protein L3"/>
    <property type="match status" value="1"/>
</dbReference>
<dbReference type="Gene3D" id="3.30.160.810">
    <property type="match status" value="1"/>
</dbReference>
<dbReference type="Gene3D" id="2.40.30.10">
    <property type="entry name" value="Translation factors"/>
    <property type="match status" value="1"/>
</dbReference>
<dbReference type="HAMAP" id="MF_01325_B">
    <property type="entry name" value="Ribosomal_uL3_B"/>
    <property type="match status" value="1"/>
</dbReference>
<dbReference type="InterPro" id="IPR000597">
    <property type="entry name" value="Ribosomal_uL3"/>
</dbReference>
<dbReference type="InterPro" id="IPR019927">
    <property type="entry name" value="Ribosomal_uL3_bac/org-type"/>
</dbReference>
<dbReference type="InterPro" id="IPR019926">
    <property type="entry name" value="Ribosomal_uL3_CS"/>
</dbReference>
<dbReference type="InterPro" id="IPR009000">
    <property type="entry name" value="Transl_B-barrel_sf"/>
</dbReference>
<dbReference type="NCBIfam" id="TIGR03625">
    <property type="entry name" value="L3_bact"/>
    <property type="match status" value="1"/>
</dbReference>
<dbReference type="PANTHER" id="PTHR11229">
    <property type="entry name" value="50S RIBOSOMAL PROTEIN L3"/>
    <property type="match status" value="1"/>
</dbReference>
<dbReference type="PANTHER" id="PTHR11229:SF16">
    <property type="entry name" value="LARGE RIBOSOMAL SUBUNIT PROTEIN UL3C"/>
    <property type="match status" value="1"/>
</dbReference>
<dbReference type="Pfam" id="PF00297">
    <property type="entry name" value="Ribosomal_L3"/>
    <property type="match status" value="1"/>
</dbReference>
<dbReference type="SUPFAM" id="SSF50447">
    <property type="entry name" value="Translation proteins"/>
    <property type="match status" value="1"/>
</dbReference>
<dbReference type="PROSITE" id="PS00474">
    <property type="entry name" value="RIBOSOMAL_L3"/>
    <property type="match status" value="1"/>
</dbReference>
<reference key="1">
    <citation type="journal article" date="2006" name="J. Bacteriol.">
        <title>Comparative genomic evidence for a close relationship between the dimorphic prosthecate bacteria Hyphomonas neptunium and Caulobacter crescentus.</title>
        <authorList>
            <person name="Badger J.H."/>
            <person name="Hoover T.R."/>
            <person name="Brun Y.V."/>
            <person name="Weiner R.M."/>
            <person name="Laub M.T."/>
            <person name="Alexandre G."/>
            <person name="Mrazek J."/>
            <person name="Ren Q."/>
            <person name="Paulsen I.T."/>
            <person name="Nelson K.E."/>
            <person name="Khouri H.M."/>
            <person name="Radune D."/>
            <person name="Sosa J."/>
            <person name="Dodson R.J."/>
            <person name="Sullivan S.A."/>
            <person name="Rosovitz M.J."/>
            <person name="Madupu R."/>
            <person name="Brinkac L.M."/>
            <person name="Durkin A.S."/>
            <person name="Daugherty S.C."/>
            <person name="Kothari S.P."/>
            <person name="Giglio M.G."/>
            <person name="Zhou L."/>
            <person name="Haft D.H."/>
            <person name="Selengut J.D."/>
            <person name="Davidsen T.M."/>
            <person name="Yang Q."/>
            <person name="Zafar N."/>
            <person name="Ward N.L."/>
        </authorList>
    </citation>
    <scope>NUCLEOTIDE SEQUENCE [LARGE SCALE GENOMIC DNA]</scope>
    <source>
        <strain>ATCC 15444</strain>
    </source>
</reference>
<protein>
    <recommendedName>
        <fullName evidence="1">Large ribosomal subunit protein uL3</fullName>
    </recommendedName>
    <alternativeName>
        <fullName evidence="2">50S ribosomal protein L3</fullName>
    </alternativeName>
</protein>
<organism>
    <name type="scientific">Hyphomonas neptunium (strain ATCC 15444)</name>
    <dbReference type="NCBI Taxonomy" id="228405"/>
    <lineage>
        <taxon>Bacteria</taxon>
        <taxon>Pseudomonadati</taxon>
        <taxon>Pseudomonadota</taxon>
        <taxon>Alphaproteobacteria</taxon>
        <taxon>Hyphomonadales</taxon>
        <taxon>Hyphomonadaceae</taxon>
        <taxon>Hyphomonas</taxon>
    </lineage>
</organism>
<feature type="chain" id="PRO_0000353605" description="Large ribosomal subunit protein uL3">
    <location>
        <begin position="1"/>
        <end position="252"/>
    </location>
</feature>
<feature type="modified residue" description="N5-methylglutamine" evidence="1">
    <location>
        <position position="169"/>
    </location>
</feature>
<keyword id="KW-0488">Methylation</keyword>
<keyword id="KW-1185">Reference proteome</keyword>
<keyword id="KW-0687">Ribonucleoprotein</keyword>
<keyword id="KW-0689">Ribosomal protein</keyword>
<keyword id="KW-0694">RNA-binding</keyword>
<keyword id="KW-0699">rRNA-binding</keyword>
<accession>Q0BYB4</accession>
<gene>
    <name evidence="1" type="primary">rplC</name>
    <name type="ordered locus">HNE_2851</name>
</gene>
<comment type="function">
    <text evidence="1">One of the primary rRNA binding proteins, it binds directly near the 3'-end of the 23S rRNA, where it nucleates assembly of the 50S subunit.</text>
</comment>
<comment type="subunit">
    <text evidence="1">Part of the 50S ribosomal subunit. Forms a cluster with proteins L14 and L19.</text>
</comment>
<comment type="PTM">
    <text evidence="1">Methylated by PrmB.</text>
</comment>
<comment type="similarity">
    <text evidence="1">Belongs to the universal ribosomal protein uL3 family.</text>
</comment>
<sequence>MTLPAARTGVLARKVGMTRIFAADGRHVPVTVLSLDGCQVVGVRSEEERSVTTKKGGQVTRTDGYKAVIMGSGDKKAKNTTKALRGQFAKAGVAPKAKLKEFRVSGDLPEVGSTVQADHFAEGQLVDVSAMSIGKGFAGAMKRWNFSGLRASHGVSISHRAHGSTGMNQDPGRVFKNKKMAGHLGDERVTTQNLVVVRTDVERGLILVKGSVPGHDGTFVEVRDAVKKALPADAPAAGSFKAPEKLSAGGEG</sequence>
<evidence type="ECO:0000255" key="1">
    <source>
        <dbReference type="HAMAP-Rule" id="MF_01325"/>
    </source>
</evidence>
<evidence type="ECO:0000305" key="2"/>
<proteinExistence type="inferred from homology"/>